<evidence type="ECO:0000250" key="1"/>
<evidence type="ECO:0000250" key="2">
    <source>
        <dbReference type="UniProtKB" id="P00157"/>
    </source>
</evidence>
<evidence type="ECO:0000255" key="3">
    <source>
        <dbReference type="PROSITE-ProRule" id="PRU00967"/>
    </source>
</evidence>
<evidence type="ECO:0000255" key="4">
    <source>
        <dbReference type="PROSITE-ProRule" id="PRU00968"/>
    </source>
</evidence>
<organism>
    <name type="scientific">Sphyrna tiburo tiburo</name>
    <name type="common">Hammerhead shark</name>
    <dbReference type="NCBI Taxonomy" id="40579"/>
    <lineage>
        <taxon>Eukaryota</taxon>
        <taxon>Metazoa</taxon>
        <taxon>Chordata</taxon>
        <taxon>Craniata</taxon>
        <taxon>Vertebrata</taxon>
        <taxon>Chondrichthyes</taxon>
        <taxon>Elasmobranchii</taxon>
        <taxon>Galeomorphii</taxon>
        <taxon>Galeoidea</taxon>
        <taxon>Carcharhiniformes</taxon>
        <taxon>Carcharhinidae</taxon>
        <taxon>Sphyrna</taxon>
    </lineage>
</organism>
<accession>P34876</accession>
<sequence length="381" mass="43254">MAIFIRKTHPLLKIMNHALVDLPAPSNISLWWNFGSLLGLCLIIQILTGLFLAMHYTADVSMAFSSVVHICRDVNYGWLIRNIHANGASLFFICVYLHIARGLYYGSYLYKETWNIGVILLFLLMATAFVGYVLPWGQMSFWGATVITNLLSAFPYIGNMLVQWIWGGFSVDNATLTRFFAFHFLLPFLILALTIIHLLFLHETGSNNPLGINSDADKISFHPYFSYKDLLGFFVMIFFLTTLALFMPNLLGDAENFIPANPLVTPPHIKPEWYFLFAYAILRSIPNKLGGVLALLFSIFILMLVPLLHTSKQRSNIFRPLTQIFFWLLVANSIILTWIGGQPVEQPFITVGQIASVSYFSLFLIIMPFASWCENKILSLN</sequence>
<protein>
    <recommendedName>
        <fullName>Cytochrome b</fullName>
    </recommendedName>
    <alternativeName>
        <fullName>Complex III subunit 3</fullName>
    </alternativeName>
    <alternativeName>
        <fullName>Complex III subunit III</fullName>
    </alternativeName>
    <alternativeName>
        <fullName>Cytochrome b-c1 complex subunit 3</fullName>
    </alternativeName>
    <alternativeName>
        <fullName>Ubiquinol-cytochrome-c reductase complex cytochrome b subunit</fullName>
    </alternativeName>
</protein>
<proteinExistence type="inferred from homology"/>
<comment type="function">
    <text evidence="2">Component of the ubiquinol-cytochrome c reductase complex (complex III or cytochrome b-c1 complex) that is part of the mitochondrial respiratory chain. The b-c1 complex mediates electron transfer from ubiquinol to cytochrome c. Contributes to the generation of a proton gradient across the mitochondrial membrane that is then used for ATP synthesis.</text>
</comment>
<comment type="cofactor">
    <cofactor evidence="2">
        <name>heme b</name>
        <dbReference type="ChEBI" id="CHEBI:60344"/>
    </cofactor>
    <text evidence="2">Binds 2 heme b groups non-covalently.</text>
</comment>
<comment type="subunit">
    <text evidence="2">The cytochrome bc1 complex contains 3 respiratory subunits (MT-CYB, CYC1 and UQCRFS1), 2 core proteins (UQCRC1 and UQCRC2) and probably 6 low-molecular weight proteins.</text>
</comment>
<comment type="subcellular location">
    <subcellularLocation>
        <location evidence="2">Mitochondrion inner membrane</location>
        <topology evidence="2">Multi-pass membrane protein</topology>
    </subcellularLocation>
</comment>
<comment type="miscellaneous">
    <text evidence="1">Heme 1 (or BL or b562) is low-potential and absorbs at about 562 nm, and heme 2 (or BH or b566) is high-potential and absorbs at about 566 nm.</text>
</comment>
<comment type="similarity">
    <text evidence="3 4">Belongs to the cytochrome b family.</text>
</comment>
<comment type="caution">
    <text evidence="2">The full-length protein contains only eight transmembrane helices, not nine as predicted by bioinformatics tools.</text>
</comment>
<feature type="chain" id="PRO_0000061607" description="Cytochrome b">
    <location>
        <begin position="1"/>
        <end position="381"/>
    </location>
</feature>
<feature type="transmembrane region" description="Helical" evidence="2">
    <location>
        <begin position="34"/>
        <end position="54"/>
    </location>
</feature>
<feature type="transmembrane region" description="Helical" evidence="2">
    <location>
        <begin position="78"/>
        <end position="99"/>
    </location>
</feature>
<feature type="transmembrane region" description="Helical" evidence="2">
    <location>
        <begin position="114"/>
        <end position="134"/>
    </location>
</feature>
<feature type="transmembrane region" description="Helical" evidence="2">
    <location>
        <begin position="179"/>
        <end position="199"/>
    </location>
</feature>
<feature type="transmembrane region" description="Helical" evidence="2">
    <location>
        <begin position="227"/>
        <end position="247"/>
    </location>
</feature>
<feature type="transmembrane region" description="Helical" evidence="2">
    <location>
        <begin position="289"/>
        <end position="309"/>
    </location>
</feature>
<feature type="transmembrane region" description="Helical" evidence="2">
    <location>
        <begin position="321"/>
        <end position="341"/>
    </location>
</feature>
<feature type="transmembrane region" description="Helical" evidence="2">
    <location>
        <begin position="348"/>
        <end position="368"/>
    </location>
</feature>
<feature type="binding site" description="axial binding residue" evidence="2">
    <location>
        <position position="84"/>
    </location>
    <ligand>
        <name>heme b</name>
        <dbReference type="ChEBI" id="CHEBI:60344"/>
        <label>b562</label>
    </ligand>
    <ligandPart>
        <name>Fe</name>
        <dbReference type="ChEBI" id="CHEBI:18248"/>
    </ligandPart>
</feature>
<feature type="binding site" description="axial binding residue" evidence="2">
    <location>
        <position position="98"/>
    </location>
    <ligand>
        <name>heme b</name>
        <dbReference type="ChEBI" id="CHEBI:60344"/>
        <label>b566</label>
    </ligand>
    <ligandPart>
        <name>Fe</name>
        <dbReference type="ChEBI" id="CHEBI:18248"/>
    </ligandPart>
</feature>
<feature type="binding site" description="axial binding residue" evidence="2">
    <location>
        <position position="183"/>
    </location>
    <ligand>
        <name>heme b</name>
        <dbReference type="ChEBI" id="CHEBI:60344"/>
        <label>b562</label>
    </ligand>
    <ligandPart>
        <name>Fe</name>
        <dbReference type="ChEBI" id="CHEBI:18248"/>
    </ligandPart>
</feature>
<feature type="binding site" description="axial binding residue" evidence="2">
    <location>
        <position position="197"/>
    </location>
    <ligand>
        <name>heme b</name>
        <dbReference type="ChEBI" id="CHEBI:60344"/>
        <label>b566</label>
    </ligand>
    <ligandPart>
        <name>Fe</name>
        <dbReference type="ChEBI" id="CHEBI:18248"/>
    </ligandPart>
</feature>
<feature type="binding site" evidence="2">
    <location>
        <position position="202"/>
    </location>
    <ligand>
        <name>a ubiquinone</name>
        <dbReference type="ChEBI" id="CHEBI:16389"/>
    </ligand>
</feature>
<name>CYB_SPHTT</name>
<keyword id="KW-0249">Electron transport</keyword>
<keyword id="KW-0349">Heme</keyword>
<keyword id="KW-0408">Iron</keyword>
<keyword id="KW-0472">Membrane</keyword>
<keyword id="KW-0479">Metal-binding</keyword>
<keyword id="KW-0496">Mitochondrion</keyword>
<keyword id="KW-0999">Mitochondrion inner membrane</keyword>
<keyword id="KW-0679">Respiratory chain</keyword>
<keyword id="KW-0812">Transmembrane</keyword>
<keyword id="KW-1133">Transmembrane helix</keyword>
<keyword id="KW-0813">Transport</keyword>
<keyword id="KW-0830">Ubiquinone</keyword>
<geneLocation type="mitochondrion"/>
<reference key="1">
    <citation type="journal article" date="1992" name="Nature">
        <title>Rates of mitochondrial DNA evolution in sharks are slow compared with mammals.</title>
        <authorList>
            <person name="Martin A.P."/>
            <person name="Naylor G.J.P."/>
            <person name="Palumbi S.R."/>
        </authorList>
    </citation>
    <scope>NUCLEOTIDE SEQUENCE [GENOMIC DNA]</scope>
</reference>
<gene>
    <name type="primary">mt-cyb</name>
    <name type="synonym">cob</name>
    <name type="synonym">cytb</name>
    <name type="synonym">mtcyb</name>
</gene>
<dbReference type="EMBL" id="L08042">
    <property type="protein sequence ID" value="AAA32068.1"/>
    <property type="molecule type" value="Genomic_DNA"/>
</dbReference>
<dbReference type="SMR" id="P34876"/>
<dbReference type="GO" id="GO:0005743">
    <property type="term" value="C:mitochondrial inner membrane"/>
    <property type="evidence" value="ECO:0007669"/>
    <property type="project" value="UniProtKB-SubCell"/>
</dbReference>
<dbReference type="GO" id="GO:0045275">
    <property type="term" value="C:respiratory chain complex III"/>
    <property type="evidence" value="ECO:0007669"/>
    <property type="project" value="InterPro"/>
</dbReference>
<dbReference type="GO" id="GO:0046872">
    <property type="term" value="F:metal ion binding"/>
    <property type="evidence" value="ECO:0007669"/>
    <property type="project" value="UniProtKB-KW"/>
</dbReference>
<dbReference type="GO" id="GO:0008121">
    <property type="term" value="F:ubiquinol-cytochrome-c reductase activity"/>
    <property type="evidence" value="ECO:0007669"/>
    <property type="project" value="InterPro"/>
</dbReference>
<dbReference type="GO" id="GO:0006122">
    <property type="term" value="P:mitochondrial electron transport, ubiquinol to cytochrome c"/>
    <property type="evidence" value="ECO:0007669"/>
    <property type="project" value="TreeGrafter"/>
</dbReference>
<dbReference type="CDD" id="cd00290">
    <property type="entry name" value="cytochrome_b_C"/>
    <property type="match status" value="1"/>
</dbReference>
<dbReference type="CDD" id="cd00284">
    <property type="entry name" value="Cytochrome_b_N"/>
    <property type="match status" value="1"/>
</dbReference>
<dbReference type="FunFam" id="1.20.810.10:FF:000002">
    <property type="entry name" value="Cytochrome b"/>
    <property type="match status" value="1"/>
</dbReference>
<dbReference type="Gene3D" id="1.20.810.10">
    <property type="entry name" value="Cytochrome Bc1 Complex, Chain C"/>
    <property type="match status" value="1"/>
</dbReference>
<dbReference type="InterPro" id="IPR005798">
    <property type="entry name" value="Cyt_b/b6_C"/>
</dbReference>
<dbReference type="InterPro" id="IPR036150">
    <property type="entry name" value="Cyt_b/b6_C_sf"/>
</dbReference>
<dbReference type="InterPro" id="IPR005797">
    <property type="entry name" value="Cyt_b/b6_N"/>
</dbReference>
<dbReference type="InterPro" id="IPR027387">
    <property type="entry name" value="Cytb/b6-like_sf"/>
</dbReference>
<dbReference type="InterPro" id="IPR030689">
    <property type="entry name" value="Cytochrome_b"/>
</dbReference>
<dbReference type="InterPro" id="IPR048260">
    <property type="entry name" value="Cytochrome_b_C_euk/bac"/>
</dbReference>
<dbReference type="InterPro" id="IPR048259">
    <property type="entry name" value="Cytochrome_b_N_euk/bac"/>
</dbReference>
<dbReference type="InterPro" id="IPR016174">
    <property type="entry name" value="Di-haem_cyt_TM"/>
</dbReference>
<dbReference type="PANTHER" id="PTHR19271">
    <property type="entry name" value="CYTOCHROME B"/>
    <property type="match status" value="1"/>
</dbReference>
<dbReference type="PANTHER" id="PTHR19271:SF16">
    <property type="entry name" value="CYTOCHROME B"/>
    <property type="match status" value="1"/>
</dbReference>
<dbReference type="Pfam" id="PF00032">
    <property type="entry name" value="Cytochrom_B_C"/>
    <property type="match status" value="1"/>
</dbReference>
<dbReference type="Pfam" id="PF00033">
    <property type="entry name" value="Cytochrome_B"/>
    <property type="match status" value="1"/>
</dbReference>
<dbReference type="PIRSF" id="PIRSF038885">
    <property type="entry name" value="COB"/>
    <property type="match status" value="1"/>
</dbReference>
<dbReference type="SUPFAM" id="SSF81648">
    <property type="entry name" value="a domain/subunit of cytochrome bc1 complex (Ubiquinol-cytochrome c reductase)"/>
    <property type="match status" value="1"/>
</dbReference>
<dbReference type="SUPFAM" id="SSF81342">
    <property type="entry name" value="Transmembrane di-heme cytochromes"/>
    <property type="match status" value="1"/>
</dbReference>
<dbReference type="PROSITE" id="PS51003">
    <property type="entry name" value="CYTB_CTER"/>
    <property type="match status" value="1"/>
</dbReference>
<dbReference type="PROSITE" id="PS51002">
    <property type="entry name" value="CYTB_NTER"/>
    <property type="match status" value="1"/>
</dbReference>